<feature type="chain" id="PRO_0000164517" description="D-aminoacyl-tRNA deacylase">
    <location>
        <begin position="1"/>
        <end position="146"/>
    </location>
</feature>
<feature type="short sequence motif" description="Gly-cisPro motif, important for rejection of L-amino acids" evidence="1">
    <location>
        <begin position="137"/>
        <end position="138"/>
    </location>
</feature>
<evidence type="ECO:0000255" key="1">
    <source>
        <dbReference type="HAMAP-Rule" id="MF_00518"/>
    </source>
</evidence>
<comment type="function">
    <text evidence="1">An aminoacyl-tRNA editing enzyme that deacylates mischarged D-aminoacyl-tRNAs. Also deacylates mischarged glycyl-tRNA(Ala), protecting cells against glycine mischarging by AlaRS. Acts via tRNA-based rather than protein-based catalysis; rejects L-amino acids rather than detecting D-amino acids in the active site. By recycling D-aminoacyl-tRNA to D-amino acids and free tRNA molecules, this enzyme counteracts the toxicity associated with the formation of D-aminoacyl-tRNA entities in vivo and helps enforce protein L-homochirality.</text>
</comment>
<comment type="catalytic activity">
    <reaction evidence="1">
        <text>glycyl-tRNA(Ala) + H2O = tRNA(Ala) + glycine + H(+)</text>
        <dbReference type="Rhea" id="RHEA:53744"/>
        <dbReference type="Rhea" id="RHEA-COMP:9657"/>
        <dbReference type="Rhea" id="RHEA-COMP:13640"/>
        <dbReference type="ChEBI" id="CHEBI:15377"/>
        <dbReference type="ChEBI" id="CHEBI:15378"/>
        <dbReference type="ChEBI" id="CHEBI:57305"/>
        <dbReference type="ChEBI" id="CHEBI:78442"/>
        <dbReference type="ChEBI" id="CHEBI:78522"/>
        <dbReference type="EC" id="3.1.1.96"/>
    </reaction>
</comment>
<comment type="catalytic activity">
    <reaction evidence="1">
        <text>a D-aminoacyl-tRNA + H2O = a tRNA + a D-alpha-amino acid + H(+)</text>
        <dbReference type="Rhea" id="RHEA:13953"/>
        <dbReference type="Rhea" id="RHEA-COMP:10123"/>
        <dbReference type="Rhea" id="RHEA-COMP:10124"/>
        <dbReference type="ChEBI" id="CHEBI:15377"/>
        <dbReference type="ChEBI" id="CHEBI:15378"/>
        <dbReference type="ChEBI" id="CHEBI:59871"/>
        <dbReference type="ChEBI" id="CHEBI:78442"/>
        <dbReference type="ChEBI" id="CHEBI:79333"/>
        <dbReference type="EC" id="3.1.1.96"/>
    </reaction>
</comment>
<comment type="subunit">
    <text evidence="1">Homodimer.</text>
</comment>
<comment type="subcellular location">
    <subcellularLocation>
        <location evidence="1">Cytoplasm</location>
    </subcellularLocation>
</comment>
<comment type="domain">
    <text evidence="1">A Gly-cisPro motif from one monomer fits into the active site of the other monomer to allow specific chiral rejection of L-amino acids.</text>
</comment>
<comment type="similarity">
    <text evidence="1">Belongs to the DTD family.</text>
</comment>
<organism>
    <name type="scientific">Bacillus cereus (strain ATCC 14579 / DSM 31 / CCUG 7414 / JCM 2152 / NBRC 15305 / NCIMB 9373 / NCTC 2599 / NRRL B-3711)</name>
    <dbReference type="NCBI Taxonomy" id="226900"/>
    <lineage>
        <taxon>Bacteria</taxon>
        <taxon>Bacillati</taxon>
        <taxon>Bacillota</taxon>
        <taxon>Bacilli</taxon>
        <taxon>Bacillales</taxon>
        <taxon>Bacillaceae</taxon>
        <taxon>Bacillus</taxon>
        <taxon>Bacillus cereus group</taxon>
    </lineage>
</organism>
<sequence>MRVVLQRSKKASVTVDGEIVGQIPFGLTLLVGITHEDTEKDATYIAEKIANLRIFEDESGKMNHSVLDVEGQVLSISQFTLYGDCRKGRRPNFMDAAKPDYAERLYDFFNEEVRKQGLHVETGKFGAMMDVSLINDGPVTLIVESK</sequence>
<accession>Q817X5</accession>
<reference key="1">
    <citation type="journal article" date="2003" name="Nature">
        <title>Genome sequence of Bacillus cereus and comparative analysis with Bacillus anthracis.</title>
        <authorList>
            <person name="Ivanova N."/>
            <person name="Sorokin A."/>
            <person name="Anderson I."/>
            <person name="Galleron N."/>
            <person name="Candelon B."/>
            <person name="Kapatral V."/>
            <person name="Bhattacharyya A."/>
            <person name="Reznik G."/>
            <person name="Mikhailova N."/>
            <person name="Lapidus A."/>
            <person name="Chu L."/>
            <person name="Mazur M."/>
            <person name="Goltsman E."/>
            <person name="Larsen N."/>
            <person name="D'Souza M."/>
            <person name="Walunas T."/>
            <person name="Grechkin Y."/>
            <person name="Pusch G."/>
            <person name="Haselkorn R."/>
            <person name="Fonstein M."/>
            <person name="Ehrlich S.D."/>
            <person name="Overbeek R."/>
            <person name="Kyrpides N.C."/>
        </authorList>
    </citation>
    <scope>NUCLEOTIDE SEQUENCE [LARGE SCALE GENOMIC DNA]</scope>
    <source>
        <strain>ATCC 14579 / DSM 31 / CCUG 7414 / JCM 2152 / NBRC 15305 / NCIMB 9373 / NCTC 2599 / NRRL B-3711</strain>
    </source>
</reference>
<keyword id="KW-0963">Cytoplasm</keyword>
<keyword id="KW-0378">Hydrolase</keyword>
<keyword id="KW-1185">Reference proteome</keyword>
<keyword id="KW-0694">RNA-binding</keyword>
<keyword id="KW-0820">tRNA-binding</keyword>
<name>DTD_BACCR</name>
<dbReference type="EC" id="3.1.1.96" evidence="1"/>
<dbReference type="EMBL" id="AE016877">
    <property type="protein sequence ID" value="AAP11313.1"/>
    <property type="molecule type" value="Genomic_DNA"/>
</dbReference>
<dbReference type="RefSeq" id="NP_834112.1">
    <property type="nucleotide sequence ID" value="NC_004722.1"/>
</dbReference>
<dbReference type="RefSeq" id="WP_001266965.1">
    <property type="nucleotide sequence ID" value="NZ_CP138336.1"/>
</dbReference>
<dbReference type="SMR" id="Q817X5"/>
<dbReference type="STRING" id="226900.BC_4400"/>
<dbReference type="KEGG" id="bce:BC4400"/>
<dbReference type="PATRIC" id="fig|226900.8.peg.4551"/>
<dbReference type="HOGENOM" id="CLU_076901_1_0_9"/>
<dbReference type="OrthoDB" id="9801395at2"/>
<dbReference type="Proteomes" id="UP000001417">
    <property type="component" value="Chromosome"/>
</dbReference>
<dbReference type="GO" id="GO:0005737">
    <property type="term" value="C:cytoplasm"/>
    <property type="evidence" value="ECO:0000318"/>
    <property type="project" value="GO_Central"/>
</dbReference>
<dbReference type="GO" id="GO:0051500">
    <property type="term" value="F:D-tyrosyl-tRNA(Tyr) deacylase activity"/>
    <property type="evidence" value="ECO:0000318"/>
    <property type="project" value="GO_Central"/>
</dbReference>
<dbReference type="GO" id="GO:0106026">
    <property type="term" value="F:Gly-tRNA(Ala) deacylase activity"/>
    <property type="evidence" value="ECO:0007669"/>
    <property type="project" value="UniProtKB-UniRule"/>
</dbReference>
<dbReference type="GO" id="GO:0043908">
    <property type="term" value="F:Ser(Gly)-tRNA(Ala) hydrolase activity"/>
    <property type="evidence" value="ECO:0007669"/>
    <property type="project" value="UniProtKB-UniRule"/>
</dbReference>
<dbReference type="GO" id="GO:0000049">
    <property type="term" value="F:tRNA binding"/>
    <property type="evidence" value="ECO:0007669"/>
    <property type="project" value="UniProtKB-UniRule"/>
</dbReference>
<dbReference type="GO" id="GO:0019478">
    <property type="term" value="P:D-amino acid catabolic process"/>
    <property type="evidence" value="ECO:0007669"/>
    <property type="project" value="UniProtKB-UniRule"/>
</dbReference>
<dbReference type="GO" id="GO:0006399">
    <property type="term" value="P:tRNA metabolic process"/>
    <property type="evidence" value="ECO:0000318"/>
    <property type="project" value="GO_Central"/>
</dbReference>
<dbReference type="CDD" id="cd00563">
    <property type="entry name" value="Dtyr_deacylase"/>
    <property type="match status" value="1"/>
</dbReference>
<dbReference type="FunFam" id="3.50.80.10:FF:000001">
    <property type="entry name" value="D-aminoacyl-tRNA deacylase"/>
    <property type="match status" value="1"/>
</dbReference>
<dbReference type="Gene3D" id="3.50.80.10">
    <property type="entry name" value="D-tyrosyl-tRNA(Tyr) deacylase"/>
    <property type="match status" value="1"/>
</dbReference>
<dbReference type="HAMAP" id="MF_00518">
    <property type="entry name" value="Deacylase_Dtd"/>
    <property type="match status" value="1"/>
</dbReference>
<dbReference type="InterPro" id="IPR003732">
    <property type="entry name" value="Daa-tRNA_deacyls_DTD"/>
</dbReference>
<dbReference type="InterPro" id="IPR023509">
    <property type="entry name" value="DTD-like_sf"/>
</dbReference>
<dbReference type="NCBIfam" id="TIGR00256">
    <property type="entry name" value="D-aminoacyl-tRNA deacylase"/>
    <property type="match status" value="1"/>
</dbReference>
<dbReference type="PANTHER" id="PTHR10472:SF5">
    <property type="entry name" value="D-AMINOACYL-TRNA DEACYLASE 1"/>
    <property type="match status" value="1"/>
</dbReference>
<dbReference type="PANTHER" id="PTHR10472">
    <property type="entry name" value="D-TYROSYL-TRNA TYR DEACYLASE"/>
    <property type="match status" value="1"/>
</dbReference>
<dbReference type="Pfam" id="PF02580">
    <property type="entry name" value="Tyr_Deacylase"/>
    <property type="match status" value="1"/>
</dbReference>
<dbReference type="SUPFAM" id="SSF69500">
    <property type="entry name" value="DTD-like"/>
    <property type="match status" value="1"/>
</dbReference>
<proteinExistence type="inferred from homology"/>
<gene>
    <name evidence="1" type="primary">dtd</name>
    <name type="ordered locus">BC_4400</name>
</gene>
<protein>
    <recommendedName>
        <fullName evidence="1">D-aminoacyl-tRNA deacylase</fullName>
        <shortName evidence="1">DTD</shortName>
        <ecNumber evidence="1">3.1.1.96</ecNumber>
    </recommendedName>
    <alternativeName>
        <fullName evidence="1">Gly-tRNA(Ala) deacylase</fullName>
    </alternativeName>
</protein>